<dbReference type="EC" id="2.7.7.6" evidence="1"/>
<dbReference type="EMBL" id="CT971583">
    <property type="protein sequence ID" value="CAK22837.1"/>
    <property type="molecule type" value="Genomic_DNA"/>
</dbReference>
<dbReference type="SMR" id="A5GIS2"/>
<dbReference type="STRING" id="32051.SynWH7803_0411"/>
<dbReference type="KEGG" id="syx:SynWH7803_0411"/>
<dbReference type="eggNOG" id="COG0202">
    <property type="taxonomic scope" value="Bacteria"/>
</dbReference>
<dbReference type="HOGENOM" id="CLU_053084_0_1_3"/>
<dbReference type="OrthoDB" id="9805706at2"/>
<dbReference type="Proteomes" id="UP000001566">
    <property type="component" value="Chromosome"/>
</dbReference>
<dbReference type="GO" id="GO:0005737">
    <property type="term" value="C:cytoplasm"/>
    <property type="evidence" value="ECO:0007669"/>
    <property type="project" value="UniProtKB-ARBA"/>
</dbReference>
<dbReference type="GO" id="GO:0000428">
    <property type="term" value="C:DNA-directed RNA polymerase complex"/>
    <property type="evidence" value="ECO:0007669"/>
    <property type="project" value="UniProtKB-KW"/>
</dbReference>
<dbReference type="GO" id="GO:0003677">
    <property type="term" value="F:DNA binding"/>
    <property type="evidence" value="ECO:0007669"/>
    <property type="project" value="UniProtKB-UniRule"/>
</dbReference>
<dbReference type="GO" id="GO:0003899">
    <property type="term" value="F:DNA-directed RNA polymerase activity"/>
    <property type="evidence" value="ECO:0007669"/>
    <property type="project" value="UniProtKB-UniRule"/>
</dbReference>
<dbReference type="GO" id="GO:0046983">
    <property type="term" value="F:protein dimerization activity"/>
    <property type="evidence" value="ECO:0007669"/>
    <property type="project" value="InterPro"/>
</dbReference>
<dbReference type="GO" id="GO:0006351">
    <property type="term" value="P:DNA-templated transcription"/>
    <property type="evidence" value="ECO:0007669"/>
    <property type="project" value="UniProtKB-UniRule"/>
</dbReference>
<dbReference type="CDD" id="cd06928">
    <property type="entry name" value="RNAP_alpha_NTD"/>
    <property type="match status" value="1"/>
</dbReference>
<dbReference type="FunFam" id="2.170.120.12:FF:000001">
    <property type="entry name" value="DNA-directed RNA polymerase subunit alpha"/>
    <property type="match status" value="1"/>
</dbReference>
<dbReference type="Gene3D" id="1.10.150.20">
    <property type="entry name" value="5' to 3' exonuclease, C-terminal subdomain"/>
    <property type="match status" value="1"/>
</dbReference>
<dbReference type="Gene3D" id="2.170.120.12">
    <property type="entry name" value="DNA-directed RNA polymerase, insert domain"/>
    <property type="match status" value="1"/>
</dbReference>
<dbReference type="Gene3D" id="3.30.1360.10">
    <property type="entry name" value="RNA polymerase, RBP11-like subunit"/>
    <property type="match status" value="1"/>
</dbReference>
<dbReference type="HAMAP" id="MF_00059">
    <property type="entry name" value="RNApol_bact_RpoA"/>
    <property type="match status" value="1"/>
</dbReference>
<dbReference type="InterPro" id="IPR011262">
    <property type="entry name" value="DNA-dir_RNA_pol_insert"/>
</dbReference>
<dbReference type="InterPro" id="IPR011263">
    <property type="entry name" value="DNA-dir_RNA_pol_RpoA/D/Rpb3"/>
</dbReference>
<dbReference type="InterPro" id="IPR011773">
    <property type="entry name" value="DNA-dir_RpoA"/>
</dbReference>
<dbReference type="InterPro" id="IPR036603">
    <property type="entry name" value="RBP11-like"/>
</dbReference>
<dbReference type="InterPro" id="IPR011260">
    <property type="entry name" value="RNAP_asu_C"/>
</dbReference>
<dbReference type="InterPro" id="IPR036643">
    <property type="entry name" value="RNApol_insert_sf"/>
</dbReference>
<dbReference type="NCBIfam" id="NF003516">
    <property type="entry name" value="PRK05182.2-2"/>
    <property type="match status" value="1"/>
</dbReference>
<dbReference type="NCBIfam" id="NF003519">
    <property type="entry name" value="PRK05182.2-5"/>
    <property type="match status" value="1"/>
</dbReference>
<dbReference type="NCBIfam" id="TIGR02027">
    <property type="entry name" value="rpoA"/>
    <property type="match status" value="1"/>
</dbReference>
<dbReference type="Pfam" id="PF01000">
    <property type="entry name" value="RNA_pol_A_bac"/>
    <property type="match status" value="1"/>
</dbReference>
<dbReference type="Pfam" id="PF03118">
    <property type="entry name" value="RNA_pol_A_CTD"/>
    <property type="match status" value="1"/>
</dbReference>
<dbReference type="Pfam" id="PF01193">
    <property type="entry name" value="RNA_pol_L"/>
    <property type="match status" value="1"/>
</dbReference>
<dbReference type="SMART" id="SM00662">
    <property type="entry name" value="RPOLD"/>
    <property type="match status" value="1"/>
</dbReference>
<dbReference type="SUPFAM" id="SSF47789">
    <property type="entry name" value="C-terminal domain of RNA polymerase alpha subunit"/>
    <property type="match status" value="1"/>
</dbReference>
<dbReference type="SUPFAM" id="SSF56553">
    <property type="entry name" value="Insert subdomain of RNA polymerase alpha subunit"/>
    <property type="match status" value="1"/>
</dbReference>
<dbReference type="SUPFAM" id="SSF55257">
    <property type="entry name" value="RBP11-like subunits of RNA polymerase"/>
    <property type="match status" value="1"/>
</dbReference>
<keyword id="KW-0240">DNA-directed RNA polymerase</keyword>
<keyword id="KW-0548">Nucleotidyltransferase</keyword>
<keyword id="KW-1185">Reference proteome</keyword>
<keyword id="KW-0804">Transcription</keyword>
<keyword id="KW-0808">Transferase</keyword>
<sequence length="312" mass="34137">MLQYQIDRIEHQIADDRSQTGVFLIGPLERGQATTLGNSLRRVLMGNLEGTAVTAVRIAGVNHEYATIPGVREDVLDILLNCKQITVNSRTSELEIGRLVVAGPATVKARDLQFSSQVQVVDGERAIATVGEGYSLELEVHVERGIGYRPVDRHNEDTSAIDLLQIDAVFMPVHRVNFTIDETAVAEGGSARERLRMEVVTDGSITPDDAIAQAANQLIELFQPLATVTMVEEVSAEPEPTAEAQIPLEELNLSVRAYNCLKRAQVNSVSDLMGFSYEDLLEIKNFGSKSADEVIEALERIGIQIPQSRTSA</sequence>
<organism>
    <name type="scientific">Synechococcus sp. (strain WH7803)</name>
    <dbReference type="NCBI Taxonomy" id="32051"/>
    <lineage>
        <taxon>Bacteria</taxon>
        <taxon>Bacillati</taxon>
        <taxon>Cyanobacteriota</taxon>
        <taxon>Cyanophyceae</taxon>
        <taxon>Synechococcales</taxon>
        <taxon>Synechococcaceae</taxon>
        <taxon>Synechococcus</taxon>
    </lineage>
</organism>
<feature type="chain" id="PRO_0000296877" description="DNA-directed RNA polymerase subunit alpha">
    <location>
        <begin position="1"/>
        <end position="312"/>
    </location>
</feature>
<feature type="region of interest" description="Alpha N-terminal domain (alpha-NTD)" evidence="1">
    <location>
        <begin position="1"/>
        <end position="229"/>
    </location>
</feature>
<feature type="region of interest" description="Alpha C-terminal domain (alpha-CTD)" evidence="1">
    <location>
        <begin position="239"/>
        <end position="312"/>
    </location>
</feature>
<comment type="function">
    <text evidence="1">DNA-dependent RNA polymerase catalyzes the transcription of DNA into RNA using the four ribonucleoside triphosphates as substrates.</text>
</comment>
<comment type="catalytic activity">
    <reaction evidence="1">
        <text>RNA(n) + a ribonucleoside 5'-triphosphate = RNA(n+1) + diphosphate</text>
        <dbReference type="Rhea" id="RHEA:21248"/>
        <dbReference type="Rhea" id="RHEA-COMP:14527"/>
        <dbReference type="Rhea" id="RHEA-COMP:17342"/>
        <dbReference type="ChEBI" id="CHEBI:33019"/>
        <dbReference type="ChEBI" id="CHEBI:61557"/>
        <dbReference type="ChEBI" id="CHEBI:140395"/>
        <dbReference type="EC" id="2.7.7.6"/>
    </reaction>
</comment>
<comment type="subunit">
    <text evidence="1">In cyanobacteria the RNAP catalytic core is composed of 2 alpha, 1 beta, 1 beta', 1 gamma and 1 omega subunit. When a sigma factor is associated with the core the holoenzyme is formed, which can initiate transcription.</text>
</comment>
<comment type="domain">
    <text evidence="1">The N-terminal domain is essential for RNAP assembly and basal transcription, whereas the C-terminal domain is involved in interaction with transcriptional regulators and with upstream promoter elements.</text>
</comment>
<comment type="similarity">
    <text evidence="1">Belongs to the RNA polymerase alpha chain family.</text>
</comment>
<gene>
    <name evidence="1" type="primary">rpoA</name>
    <name type="ordered locus">SynWH7803_0411</name>
</gene>
<evidence type="ECO:0000255" key="1">
    <source>
        <dbReference type="HAMAP-Rule" id="MF_00059"/>
    </source>
</evidence>
<protein>
    <recommendedName>
        <fullName evidence="1">DNA-directed RNA polymerase subunit alpha</fullName>
        <shortName evidence="1">RNAP subunit alpha</shortName>
        <ecNumber evidence="1">2.7.7.6</ecNumber>
    </recommendedName>
    <alternativeName>
        <fullName evidence="1">RNA polymerase subunit alpha</fullName>
    </alternativeName>
    <alternativeName>
        <fullName evidence="1">Transcriptase subunit alpha</fullName>
    </alternativeName>
</protein>
<reference key="1">
    <citation type="submission" date="2006-05" db="EMBL/GenBank/DDBJ databases">
        <authorList>
            <consortium name="Genoscope"/>
        </authorList>
    </citation>
    <scope>NUCLEOTIDE SEQUENCE [LARGE SCALE GENOMIC DNA]</scope>
    <source>
        <strain>WH7803</strain>
    </source>
</reference>
<name>RPOA_SYNPW</name>
<proteinExistence type="inferred from homology"/>
<accession>A5GIS2</accession>